<gene>
    <name evidence="1" type="primary">lldD</name>
    <name type="ordered locus">ABBFA_003443</name>
</gene>
<feature type="chain" id="PRO_0000383405" description="L-lactate dehydrogenase">
    <location>
        <begin position="1"/>
        <end position="383"/>
    </location>
</feature>
<feature type="domain" description="FMN hydroxy acid dehydrogenase" evidence="1">
    <location>
        <begin position="1"/>
        <end position="380"/>
    </location>
</feature>
<feature type="active site" description="Proton acceptor" evidence="1">
    <location>
        <position position="275"/>
    </location>
</feature>
<feature type="binding site" evidence="1">
    <location>
        <position position="24"/>
    </location>
    <ligand>
        <name>substrate</name>
    </ligand>
</feature>
<feature type="binding site" evidence="1">
    <location>
        <position position="106"/>
    </location>
    <ligand>
        <name>FMN</name>
        <dbReference type="ChEBI" id="CHEBI:58210"/>
    </ligand>
</feature>
<feature type="binding site" evidence="1">
    <location>
        <position position="127"/>
    </location>
    <ligand>
        <name>FMN</name>
        <dbReference type="ChEBI" id="CHEBI:58210"/>
    </ligand>
</feature>
<feature type="binding site" evidence="1">
    <location>
        <position position="129"/>
    </location>
    <ligand>
        <name>substrate</name>
    </ligand>
</feature>
<feature type="binding site" evidence="1">
    <location>
        <position position="155"/>
    </location>
    <ligand>
        <name>FMN</name>
        <dbReference type="ChEBI" id="CHEBI:58210"/>
    </ligand>
</feature>
<feature type="binding site" evidence="1">
    <location>
        <position position="164"/>
    </location>
    <ligand>
        <name>substrate</name>
    </ligand>
</feature>
<feature type="binding site" evidence="1">
    <location>
        <position position="251"/>
    </location>
    <ligand>
        <name>FMN</name>
        <dbReference type="ChEBI" id="CHEBI:58210"/>
    </ligand>
</feature>
<feature type="binding site" evidence="1">
    <location>
        <position position="278"/>
    </location>
    <ligand>
        <name>substrate</name>
    </ligand>
</feature>
<feature type="binding site" evidence="1">
    <location>
        <begin position="306"/>
        <end position="330"/>
    </location>
    <ligand>
        <name>FMN</name>
        <dbReference type="ChEBI" id="CHEBI:58210"/>
    </ligand>
</feature>
<organism>
    <name type="scientific">Acinetobacter baumannii (strain AB307-0294)</name>
    <dbReference type="NCBI Taxonomy" id="557600"/>
    <lineage>
        <taxon>Bacteria</taxon>
        <taxon>Pseudomonadati</taxon>
        <taxon>Pseudomonadota</taxon>
        <taxon>Gammaproteobacteria</taxon>
        <taxon>Moraxellales</taxon>
        <taxon>Moraxellaceae</taxon>
        <taxon>Acinetobacter</taxon>
        <taxon>Acinetobacter calcoaceticus/baumannii complex</taxon>
    </lineage>
</organism>
<accession>B7H2H0</accession>
<protein>
    <recommendedName>
        <fullName evidence="1">L-lactate dehydrogenase</fullName>
        <ecNumber evidence="1">1.1.-.-</ecNumber>
    </recommendedName>
</protein>
<dbReference type="EC" id="1.1.-.-" evidence="1"/>
<dbReference type="EMBL" id="CP001172">
    <property type="protein sequence ID" value="ACJ58290.1"/>
    <property type="molecule type" value="Genomic_DNA"/>
</dbReference>
<dbReference type="RefSeq" id="WP_000587282.1">
    <property type="nucleotide sequence ID" value="NZ_CP001172.1"/>
</dbReference>
<dbReference type="SMR" id="B7H2H0"/>
<dbReference type="GeneID" id="92892082"/>
<dbReference type="HOGENOM" id="CLU_020639_0_0_6"/>
<dbReference type="Proteomes" id="UP000006924">
    <property type="component" value="Chromosome"/>
</dbReference>
<dbReference type="GO" id="GO:0005886">
    <property type="term" value="C:plasma membrane"/>
    <property type="evidence" value="ECO:0007669"/>
    <property type="project" value="UniProtKB-SubCell"/>
</dbReference>
<dbReference type="GO" id="GO:0010181">
    <property type="term" value="F:FMN binding"/>
    <property type="evidence" value="ECO:0007669"/>
    <property type="project" value="InterPro"/>
</dbReference>
<dbReference type="GO" id="GO:0004459">
    <property type="term" value="F:L-lactate dehydrogenase activity"/>
    <property type="evidence" value="ECO:0007669"/>
    <property type="project" value="UniProtKB-UniRule"/>
</dbReference>
<dbReference type="GO" id="GO:0009060">
    <property type="term" value="P:aerobic respiration"/>
    <property type="evidence" value="ECO:0007669"/>
    <property type="project" value="TreeGrafter"/>
</dbReference>
<dbReference type="GO" id="GO:0006089">
    <property type="term" value="P:lactate metabolic process"/>
    <property type="evidence" value="ECO:0007669"/>
    <property type="project" value="UniProtKB-UniRule"/>
</dbReference>
<dbReference type="CDD" id="cd02809">
    <property type="entry name" value="alpha_hydroxyacid_oxid_FMN"/>
    <property type="match status" value="1"/>
</dbReference>
<dbReference type="FunFam" id="3.20.20.70:FF:000029">
    <property type="entry name" value="L-lactate dehydrogenase"/>
    <property type="match status" value="1"/>
</dbReference>
<dbReference type="Gene3D" id="3.20.20.70">
    <property type="entry name" value="Aldolase class I"/>
    <property type="match status" value="1"/>
</dbReference>
<dbReference type="HAMAP" id="MF_01559">
    <property type="entry name" value="L_lact_dehydr"/>
    <property type="match status" value="1"/>
</dbReference>
<dbReference type="InterPro" id="IPR013785">
    <property type="entry name" value="Aldolase_TIM"/>
</dbReference>
<dbReference type="InterPro" id="IPR012133">
    <property type="entry name" value="Alpha-hydoxy_acid_DH_FMN"/>
</dbReference>
<dbReference type="InterPro" id="IPR000262">
    <property type="entry name" value="FMN-dep_DH"/>
</dbReference>
<dbReference type="InterPro" id="IPR037396">
    <property type="entry name" value="FMN_HAD"/>
</dbReference>
<dbReference type="InterPro" id="IPR008259">
    <property type="entry name" value="FMN_hydac_DH_AS"/>
</dbReference>
<dbReference type="InterPro" id="IPR020920">
    <property type="entry name" value="LldD"/>
</dbReference>
<dbReference type="NCBIfam" id="NF033901">
    <property type="entry name" value="L_lactate_LldD"/>
    <property type="match status" value="1"/>
</dbReference>
<dbReference type="NCBIfam" id="NF008398">
    <property type="entry name" value="PRK11197.1"/>
    <property type="match status" value="1"/>
</dbReference>
<dbReference type="PANTHER" id="PTHR10578:SF85">
    <property type="entry name" value="L-LACTATE DEHYDROGENASE"/>
    <property type="match status" value="1"/>
</dbReference>
<dbReference type="PANTHER" id="PTHR10578">
    <property type="entry name" value="S -2-HYDROXY-ACID OXIDASE-RELATED"/>
    <property type="match status" value="1"/>
</dbReference>
<dbReference type="Pfam" id="PF01070">
    <property type="entry name" value="FMN_dh"/>
    <property type="match status" value="1"/>
</dbReference>
<dbReference type="PIRSF" id="PIRSF000138">
    <property type="entry name" value="Al-hdrx_acd_dh"/>
    <property type="match status" value="1"/>
</dbReference>
<dbReference type="SUPFAM" id="SSF51395">
    <property type="entry name" value="FMN-linked oxidoreductases"/>
    <property type="match status" value="1"/>
</dbReference>
<dbReference type="PROSITE" id="PS00557">
    <property type="entry name" value="FMN_HYDROXY_ACID_DH_1"/>
    <property type="match status" value="1"/>
</dbReference>
<dbReference type="PROSITE" id="PS51349">
    <property type="entry name" value="FMN_HYDROXY_ACID_DH_2"/>
    <property type="match status" value="1"/>
</dbReference>
<reference key="1">
    <citation type="journal article" date="2008" name="J. Bacteriol.">
        <title>Comparative genome sequence analysis of multidrug-resistant Acinetobacter baumannii.</title>
        <authorList>
            <person name="Adams M.D."/>
            <person name="Goglin K."/>
            <person name="Molyneaux N."/>
            <person name="Hujer K.M."/>
            <person name="Lavender H."/>
            <person name="Jamison J.J."/>
            <person name="MacDonald I.J."/>
            <person name="Martin K.M."/>
            <person name="Russo T."/>
            <person name="Campagnari A.A."/>
            <person name="Hujer A.M."/>
            <person name="Bonomo R.A."/>
            <person name="Gill S.R."/>
        </authorList>
    </citation>
    <scope>NUCLEOTIDE SEQUENCE [LARGE SCALE GENOMIC DNA]</scope>
    <source>
        <strain>AB307-0294</strain>
    </source>
</reference>
<keyword id="KW-0997">Cell inner membrane</keyword>
<keyword id="KW-1003">Cell membrane</keyword>
<keyword id="KW-0285">Flavoprotein</keyword>
<keyword id="KW-0288">FMN</keyword>
<keyword id="KW-0472">Membrane</keyword>
<keyword id="KW-0560">Oxidoreductase</keyword>
<name>LLDD_ACIB3</name>
<proteinExistence type="inferred from homology"/>
<comment type="function">
    <text evidence="1">Catalyzes the conversion of L-lactate to pyruvate. Is coupled to the respiratory chain.</text>
</comment>
<comment type="catalytic activity">
    <reaction evidence="1">
        <text>(S)-lactate + A = pyruvate + AH2</text>
        <dbReference type="Rhea" id="RHEA:45816"/>
        <dbReference type="ChEBI" id="CHEBI:13193"/>
        <dbReference type="ChEBI" id="CHEBI:15361"/>
        <dbReference type="ChEBI" id="CHEBI:16651"/>
        <dbReference type="ChEBI" id="CHEBI:17499"/>
    </reaction>
</comment>
<comment type="cofactor">
    <cofactor evidence="1">
        <name>FMN</name>
        <dbReference type="ChEBI" id="CHEBI:58210"/>
    </cofactor>
</comment>
<comment type="subcellular location">
    <subcellularLocation>
        <location evidence="1">Cell inner membrane</location>
        <topology evidence="1">Peripheral membrane protein</topology>
    </subcellularLocation>
</comment>
<comment type="similarity">
    <text evidence="1">Belongs to the FMN-dependent alpha-hydroxy acid dehydrogenase family.</text>
</comment>
<sequence length="383" mass="41648">MIISSGNDYRAAAQRRLPPFLFHYIDGGAYAEYTLKRNVQDLSEIALRQRVLNDMSALSLETKLFNETLSMPVALAPVGLTGMYARRGEVQAAMAADKKGIPFTLSTVSVCPIEEVAPAINRPMWFQLYVLRDRGFMRNALERAKAAGCSTLVFTVDMPVPGARYRDAHSGMSGPNAAMRRYMQSVFHPHWSWNVGLMGRPHDLGNISKYLGKPTGLEDYIGWLGSNFDPSISWKDLEWIREFWDGPMVIKGILDPEDAKDAVRFGADGIVVSNHGGRQLDGVMSSARALPAIADAVKGDLAILADSGIRNGLDVVRMLALGADTVLLGRAFVYALAAAGGQGVSNLLDLIDKEMRVAMTLTGAKSISDINADCLVQAIKQGL</sequence>
<evidence type="ECO:0000255" key="1">
    <source>
        <dbReference type="HAMAP-Rule" id="MF_01559"/>
    </source>
</evidence>